<accession>Q9X079</accession>
<proteinExistence type="inferred from homology"/>
<feature type="signal peptide" evidence="2">
    <location>
        <begin position="1"/>
        <end position="23"/>
    </location>
</feature>
<feature type="chain" id="PRO_0000036245" description="Alpha-2-macroglobulin">
    <location>
        <begin position="24"/>
        <end position="1536"/>
    </location>
</feature>
<feature type="cross-link" description="Isoglutamyl cysteine thioester (Cys-Gln)" evidence="1">
    <location>
        <begin position="919"/>
        <end position="922"/>
    </location>
</feature>
<protein>
    <recommendedName>
        <fullName evidence="1">Alpha-2-macroglobulin</fullName>
    </recommendedName>
</protein>
<evidence type="ECO:0000250" key="1">
    <source>
        <dbReference type="UniProtKB" id="P76578"/>
    </source>
</evidence>
<evidence type="ECO:0000255" key="2"/>
<evidence type="ECO:0000305" key="3"/>
<name>A2MG_THEMA</name>
<dbReference type="EMBL" id="AE000512">
    <property type="protein sequence ID" value="AAD36063.1"/>
    <property type="molecule type" value="Genomic_DNA"/>
</dbReference>
<dbReference type="PIR" id="E72310">
    <property type="entry name" value="E72310"/>
</dbReference>
<dbReference type="RefSeq" id="NP_228792.1">
    <property type="nucleotide sequence ID" value="NC_000853.1"/>
</dbReference>
<dbReference type="RefSeq" id="WP_010865234.1">
    <property type="nucleotide sequence ID" value="NC_000853.1"/>
</dbReference>
<dbReference type="SMR" id="Q9X079"/>
<dbReference type="STRING" id="243274.TM_0984"/>
<dbReference type="PaxDb" id="243274-THEMA_09430"/>
<dbReference type="EnsemblBacteria" id="AAD36063">
    <property type="protein sequence ID" value="AAD36063"/>
    <property type="gene ID" value="TM_0984"/>
</dbReference>
<dbReference type="KEGG" id="tma:TM0984"/>
<dbReference type="PATRIC" id="fig|243274.5.peg.997"/>
<dbReference type="eggNOG" id="COG2373">
    <property type="taxonomic scope" value="Bacteria"/>
</dbReference>
<dbReference type="InParanoid" id="Q9X079"/>
<dbReference type="OrthoDB" id="9767116at2"/>
<dbReference type="Proteomes" id="UP000008183">
    <property type="component" value="Chromosome"/>
</dbReference>
<dbReference type="GO" id="GO:0005615">
    <property type="term" value="C:extracellular space"/>
    <property type="evidence" value="ECO:0007669"/>
    <property type="project" value="InterPro"/>
</dbReference>
<dbReference type="GO" id="GO:0004866">
    <property type="term" value="F:endopeptidase inhibitor activity"/>
    <property type="evidence" value="ECO:0007669"/>
    <property type="project" value="InterPro"/>
</dbReference>
<dbReference type="CDD" id="cd02891">
    <property type="entry name" value="A2M_like"/>
    <property type="match status" value="1"/>
</dbReference>
<dbReference type="Gene3D" id="1.50.10.20">
    <property type="match status" value="1"/>
</dbReference>
<dbReference type="Gene3D" id="2.20.130.20">
    <property type="match status" value="1"/>
</dbReference>
<dbReference type="Gene3D" id="2.60.40.1930">
    <property type="match status" value="1"/>
</dbReference>
<dbReference type="Gene3D" id="2.60.40.10">
    <property type="entry name" value="Immunoglobulins"/>
    <property type="match status" value="1"/>
</dbReference>
<dbReference type="InterPro" id="IPR050473">
    <property type="entry name" value="A2M/Complement_sys"/>
</dbReference>
<dbReference type="InterPro" id="IPR011625">
    <property type="entry name" value="A2M_N_BRD"/>
</dbReference>
<dbReference type="InterPro" id="IPR047565">
    <property type="entry name" value="Alpha-macroglob_thiol-ester_cl"/>
</dbReference>
<dbReference type="InterPro" id="IPR011626">
    <property type="entry name" value="Alpha-macroglobulin_TED"/>
</dbReference>
<dbReference type="InterPro" id="IPR041246">
    <property type="entry name" value="Bact_MG10"/>
</dbReference>
<dbReference type="InterPro" id="IPR013783">
    <property type="entry name" value="Ig-like_fold"/>
</dbReference>
<dbReference type="InterPro" id="IPR001599">
    <property type="entry name" value="Macroglobln_a2"/>
</dbReference>
<dbReference type="InterPro" id="IPR002890">
    <property type="entry name" value="MG2"/>
</dbReference>
<dbReference type="InterPro" id="IPR008930">
    <property type="entry name" value="Terpenoid_cyclase/PrenylTrfase"/>
</dbReference>
<dbReference type="PANTHER" id="PTHR11412:SF136">
    <property type="entry name" value="CD109 ANTIGEN"/>
    <property type="match status" value="1"/>
</dbReference>
<dbReference type="PANTHER" id="PTHR11412">
    <property type="entry name" value="MACROGLOBULIN / COMPLEMENT"/>
    <property type="match status" value="1"/>
</dbReference>
<dbReference type="Pfam" id="PF00207">
    <property type="entry name" value="A2M"/>
    <property type="match status" value="1"/>
</dbReference>
<dbReference type="Pfam" id="PF07703">
    <property type="entry name" value="A2M_BRD"/>
    <property type="match status" value="1"/>
</dbReference>
<dbReference type="Pfam" id="PF17973">
    <property type="entry name" value="bMG10"/>
    <property type="match status" value="1"/>
</dbReference>
<dbReference type="Pfam" id="PF01835">
    <property type="entry name" value="MG2"/>
    <property type="match status" value="1"/>
</dbReference>
<dbReference type="Pfam" id="PF07678">
    <property type="entry name" value="TED_complement"/>
    <property type="match status" value="1"/>
</dbReference>
<dbReference type="SMART" id="SM01360">
    <property type="entry name" value="A2M"/>
    <property type="match status" value="1"/>
</dbReference>
<dbReference type="SMART" id="SM01359">
    <property type="entry name" value="A2M_N_2"/>
    <property type="match status" value="1"/>
</dbReference>
<dbReference type="SMART" id="SM01419">
    <property type="entry name" value="Thiol-ester_cl"/>
    <property type="match status" value="1"/>
</dbReference>
<dbReference type="SUPFAM" id="SSF48239">
    <property type="entry name" value="Terpenoid cyclases/Protein prenyltransferases"/>
    <property type="match status" value="1"/>
</dbReference>
<reference key="1">
    <citation type="journal article" date="1999" name="Nature">
        <title>Evidence for lateral gene transfer between Archaea and Bacteria from genome sequence of Thermotoga maritima.</title>
        <authorList>
            <person name="Nelson K.E."/>
            <person name="Clayton R.A."/>
            <person name="Gill S.R."/>
            <person name="Gwinn M.L."/>
            <person name="Dodson R.J."/>
            <person name="Haft D.H."/>
            <person name="Hickey E.K."/>
            <person name="Peterson J.D."/>
            <person name="Nelson W.C."/>
            <person name="Ketchum K.A."/>
            <person name="McDonald L.A."/>
            <person name="Utterback T.R."/>
            <person name="Malek J.A."/>
            <person name="Linher K.D."/>
            <person name="Garrett M.M."/>
            <person name="Stewart A.M."/>
            <person name="Cotton M.D."/>
            <person name="Pratt M.S."/>
            <person name="Phillips C.A."/>
            <person name="Richardson D.L."/>
            <person name="Heidelberg J.F."/>
            <person name="Sutton G.G."/>
            <person name="Fleischmann R.D."/>
            <person name="Eisen J.A."/>
            <person name="White O."/>
            <person name="Salzberg S.L."/>
            <person name="Smith H.O."/>
            <person name="Venter J.C."/>
            <person name="Fraser C.M."/>
        </authorList>
    </citation>
    <scope>NUCLEOTIDE SEQUENCE [LARGE SCALE GENOMIC DNA]</scope>
    <source>
        <strain>ATCC 43589 / DSM 3109 / JCM 10099 / NBRC 100826 / MSB8</strain>
    </source>
</reference>
<comment type="function">
    <text evidence="1">Protects the bacterial cell from peptidases.</text>
</comment>
<comment type="similarity">
    <text evidence="3">Belongs to the protease inhibitor I39 (alpha-2-macroglobulin) family. Bacterial alpha-2-macroglobulin subfamily.</text>
</comment>
<organism>
    <name type="scientific">Thermotoga maritima (strain ATCC 43589 / DSM 3109 / JCM 10099 / NBRC 100826 / MSB8)</name>
    <dbReference type="NCBI Taxonomy" id="243274"/>
    <lineage>
        <taxon>Bacteria</taxon>
        <taxon>Thermotogati</taxon>
        <taxon>Thermotogota</taxon>
        <taxon>Thermotogae</taxon>
        <taxon>Thermotogales</taxon>
        <taxon>Thermotogaceae</taxon>
        <taxon>Thermotoga</taxon>
    </lineage>
</organism>
<gene>
    <name type="ordered locus">TM_0984</name>
</gene>
<sequence length="1536" mass="175956">MGMKRLIFLVFLLISFSLFGGYAYFSRYPVLHPDEGLSFVISDLENITLNVWKISEEDFLKAVFDPESFNFSLLEITRPIYSKKFSSEEWKEFSFPLKDRGFYFATLVSNEGTVFRRVIDRSLFIVTDLEAIYFSDSEKLRLHVFDSDGDFVEGAEVLLFEDSKLIDRVFTGKDGVVSITKHFDTFYIRYGDSRFFGGVYFSGGGLEREKLFFVTDRPIYKPSDTVHFRGQIFSFEEGLYKAFEKTKVTVSIFDTKKNEVYRSEFETDELGGFSGSMKLPDTASVGLYKVNVDHGGRRYYEYFLVEEYRKPEYKVEIETDKDVYISGEVVNYLVRVKYFNGQPVAKAQVAYYVRAFPEEGSGYLVYRGTDFTDEEGNLRLGVKTEEGFQGSYRLEVIVTDESQRQIEETRSVKVYADNVLISPLDRYVSTSPGKQVRVKVKVTDLSGNPLNGLLTTSSEDSTSTVAVENGEAIVTFTPKEPKSYRIELSFGKANTHFYVYAYCGAGTSSEFVINPATNTVKPGDELSVQILAPGKVMGVLGIVSNRVYDTIPVSFTGSVNLRVRIPKDIPEKNLFISFVGLDDNGRIYKLERLNVLLDTNFTTMKILFDKDQYEPGEMAQITIESNVDRVCLFLVDEAIYAMVGAEPPVLENFLYPYMNYPRTRGGFPHYWRLYVSRNSFRNKLASLPEEKTFADFKQNALPSKLNVREYFPDTALWIPSLKLHNGTARVSFKVPDSITSFRATAYGFSKDRFSQTESEMVVSKKFYLMPHLPSFLRESDVIKISATVFNRTSKTLPVQLTVELPENIELLEGSSSRHFLMEANSSHTETWTVKAVSASEGSFVKFVAVGEDLNDAVSMRLPVERFAFEREFYRIMLLDGKETLEIPGQFISSRIRFLDSIVPLVEDSLKRLIDFPYGCVEQTMSRFFPAVVAASAGIEVENLEEIIQRGLFKLYSYQHNDGGWGWFRFGESDDFMTCYVMEGLYFTMKAGYDVAESVLQRGIEYLRKHPSAYGSYVLDLYGVNHEPFKPESEADLVFLSLSSKEALKQLMNYVVQDEQKAYLNVYSNNPLISEIQLNSVFLRALAKWKEFPELERKVTNYLLLKKDSAFWTSTKDTSFVILALLEAMPEYASTTLKVINSENTFELKPGEERSLVPGSLTVSGKGIVEVEVVYIEVPKEAVSEGLEIKREFYKRYELLIEENKMIVDAFVPIGRGYVPRSIHPVEKEQTEELYILPYKYWKKTIEYRGVPLEINGAEVKIKGETYTFFRIETFNGLILVFFRNEALIYDTEKNTITRYLDVTDAGFMRSGPVFLMKGFVLVGDEKIPVPEDVTGLSCTMDEILLRGENKTYWYRNGEFVDLPFVARRVFFWDGKKLVAENIRFSGSSKTLRNRVFEVVFDVGDVKIELGDIIKTVVRVKGDGNYLIVEDFIPSCAQVLSNYREKGIEENKFSYSWYSSWNAWYSGREIRTDRVALFARYLYGNSFDYVWRATAEGVFHLLPARVYPMYSRGLYAHTDPDVLFIGADFIDGRDDQP</sequence>
<keyword id="KW-0646">Protease inhibitor</keyword>
<keyword id="KW-1185">Reference proteome</keyword>
<keyword id="KW-0732">Signal</keyword>
<keyword id="KW-0882">Thioester bond</keyword>